<accession>Q9ZQS5</accession>
<accession>Q9T2H0</accession>
<feature type="transit peptide" description="Chloroplast" evidence="1">
    <location>
        <begin position="1"/>
        <end position="36"/>
    </location>
</feature>
<feature type="transit peptide" description="Thylakoid" evidence="4">
    <location>
        <begin position="37"/>
        <end position="61"/>
    </location>
</feature>
<feature type="chain" id="PRO_0000029609" description="Photosystem II extrinsic protein U, chloroplastic">
    <location>
        <begin position="62"/>
        <end position="154"/>
    </location>
</feature>
<feature type="sequence conflict" description="In Ref. 2; AA sequence." evidence="6" ref="2">
    <original>N</original>
    <variation>D</variation>
    <location>
        <position position="80"/>
    </location>
</feature>
<feature type="sequence conflict" description="In Ref. 2; AA sequence." evidence="6" ref="2">
    <original>F</original>
    <variation>I</variation>
    <location>
        <position position="90"/>
    </location>
</feature>
<name>PSBU_CYACA</name>
<organism>
    <name type="scientific">Cyanidium caldarium</name>
    <name type="common">Red alga</name>
    <dbReference type="NCBI Taxonomy" id="2771"/>
    <lineage>
        <taxon>Eukaryota</taxon>
        <taxon>Rhodophyta</taxon>
        <taxon>Bangiophyceae</taxon>
        <taxon>Cyanidiales</taxon>
        <taxon>Cyanidiaceae</taxon>
        <taxon>Cyanidium</taxon>
    </lineage>
</organism>
<dbReference type="EMBL" id="AB023805">
    <property type="protein sequence ID" value="BAA75398.1"/>
    <property type="status" value="ALT_INIT"/>
    <property type="molecule type" value="mRNA"/>
</dbReference>
<dbReference type="PDB" id="4YUU">
    <property type="method" value="X-ray"/>
    <property type="resolution" value="2.77 A"/>
    <property type="chains" value="U1/U2/u1/u2=1-154"/>
</dbReference>
<dbReference type="PDBsum" id="4YUU"/>
<dbReference type="SMR" id="Q9ZQS5"/>
<dbReference type="GO" id="GO:0009535">
    <property type="term" value="C:chloroplast thylakoid membrane"/>
    <property type="evidence" value="ECO:0007669"/>
    <property type="project" value="UniProtKB-SubCell"/>
</dbReference>
<dbReference type="GO" id="GO:0019898">
    <property type="term" value="C:extrinsic component of membrane"/>
    <property type="evidence" value="ECO:0007669"/>
    <property type="project" value="InterPro"/>
</dbReference>
<dbReference type="GO" id="GO:0009523">
    <property type="term" value="C:photosystem II"/>
    <property type="evidence" value="ECO:0007669"/>
    <property type="project" value="UniProtKB-KW"/>
</dbReference>
<dbReference type="GO" id="GO:0015979">
    <property type="term" value="P:photosynthesis"/>
    <property type="evidence" value="ECO:0007669"/>
    <property type="project" value="UniProtKB-KW"/>
</dbReference>
<dbReference type="GO" id="GO:0042549">
    <property type="term" value="P:photosystem II stabilization"/>
    <property type="evidence" value="ECO:0007669"/>
    <property type="project" value="InterPro"/>
</dbReference>
<dbReference type="Gene3D" id="1.10.150.320">
    <property type="entry name" value="Photosystem II 12 kDa extrinsic protein"/>
    <property type="match status" value="1"/>
</dbReference>
<dbReference type="InterPro" id="IPR010527">
    <property type="entry name" value="PSII_PsbU"/>
</dbReference>
<dbReference type="InterPro" id="IPR006311">
    <property type="entry name" value="TAT_signal"/>
</dbReference>
<dbReference type="NCBIfam" id="NF002708">
    <property type="entry name" value="PRK02515.1"/>
    <property type="match status" value="1"/>
</dbReference>
<dbReference type="Pfam" id="PF06514">
    <property type="entry name" value="PsbU"/>
    <property type="match status" value="1"/>
</dbReference>
<dbReference type="SUPFAM" id="SSF81585">
    <property type="entry name" value="PsbU/PolX domain-like"/>
    <property type="match status" value="1"/>
</dbReference>
<dbReference type="PROSITE" id="PS51318">
    <property type="entry name" value="TAT"/>
    <property type="match status" value="1"/>
</dbReference>
<gene>
    <name evidence="5" type="primary">psbU</name>
</gene>
<protein>
    <recommendedName>
        <fullName evidence="6">Photosystem II extrinsic protein U, chloroplastic</fullName>
        <shortName evidence="6">PsbU</shortName>
    </recommendedName>
    <alternativeName>
        <fullName evidence="8">Photosystem II 12 kDa extrinsic protein</fullName>
        <shortName evidence="5">PS II complex 12 kDa extrinsic protein</shortName>
    </alternativeName>
</protein>
<keyword id="KW-0002">3D-structure</keyword>
<keyword id="KW-0150">Chloroplast</keyword>
<keyword id="KW-0903">Direct protein sequencing</keyword>
<keyword id="KW-0249">Electron transport</keyword>
<keyword id="KW-0472">Membrane</keyword>
<keyword id="KW-0602">Photosynthesis</keyword>
<keyword id="KW-0604">Photosystem II</keyword>
<keyword id="KW-0934">Plastid</keyword>
<keyword id="KW-0793">Thylakoid</keyword>
<keyword id="KW-0809">Transit peptide</keyword>
<keyword id="KW-0813">Transport</keyword>
<proteinExistence type="evidence at protein level"/>
<comment type="function">
    <text evidence="2 4">One of the extrinsic, lumenal subunits of photosystem II (PSII). PSII is a light-driven water plastoquinone oxidoreductase, using light energy to abstract electrons from H(2)O, generating a proton gradient subsequently used for ATP formation. The extrinsic proteins stabilize the structure of photosystem II oxygen-evolving complex (OEC), the ion environment of oxygen evolution and protect the OEC against heat-induced inactivation (PubMed:10381374, PubMed:8534673).</text>
</comment>
<comment type="subunit">
    <text evidence="2 3 4 7">PSII is composed of 1 copy each of membrane proteins PsbA, PsbB, PsbC, PsbD, PsbE, PsbF, PsbH, PsbI, PsbJ, PsbK, PsbL, PsbM, PsbT, PsbY, PsbZ, Psb30/Ycf12, at least 3 peripheral proteins of the oxygen-evolving complex and a large number of cofactors. It forms dimeric complexes (PubMed:12941874). The extrinsic subunits in red algae are PsbO (OEC33), PsbQ', cytochrome c-550 and PsbU (PubMed:10381374, PubMed:12941874, PubMed:8534673).</text>
</comment>
<comment type="subcellular location">
    <subcellularLocation>
        <location evidence="2 4">Plastid</location>
        <location evidence="2 4">Chloroplast thylakoid membrane</location>
        <topology evidence="2 4">Peripheral membrane protein</topology>
        <orientation evidence="2 4">Lumenal side</orientation>
    </subcellularLocation>
    <text evidence="2 4">Associated with photosystem II at the lumenal side of the thylakoid membrane.</text>
</comment>
<comment type="PTM">
    <text evidence="6">Predicted to be translocated into the thylakoid lumen by the Tat system. The position of the first transit peptide cleavage has not been experimentally proven.</text>
</comment>
<comment type="similarity">
    <text evidence="6">Belongs to the PsbU family.</text>
</comment>
<comment type="sequence caution" evidence="6">
    <conflict type="erroneous initiation">
        <sequence resource="EMBL-CDS" id="BAA75398"/>
    </conflict>
    <text>Extended N-terminus.</text>
</comment>
<reference key="1">
    <citation type="journal article" date="1999" name="Biochem. Biophys. Res. Commun.">
        <title>Cloning, expression of the psbU gene, and functional studies of the recombinant 12-kDa protein of photosystem II from a red alga Cyanidium caldarium.</title>
        <authorList>
            <person name="Ohta H."/>
            <person name="Okumura A."/>
            <person name="Okuyama S."/>
            <person name="Akiyama A."/>
            <person name="Iwai M."/>
            <person name="Yoshihara S."/>
            <person name="Shen J.-R."/>
            <person name="Kamo M."/>
            <person name="Enami I."/>
        </authorList>
    </citation>
    <scope>NUCLEOTIDE SEQUENCE [MRNA]</scope>
    <scope>FUNCTION</scope>
    <scope>SUBUNIT</scope>
    <scope>SUBCELLULAR LOCATION</scope>
</reference>
<reference key="2">
    <citation type="journal article" date="1995" name="Biochim. Biophys. Acta">
        <title>Isolation and characterization of a Photosystem II complex from the red alga Cyanidium caldarium: association of cytochrome c-550 and a 12 kDa protein with the complex.</title>
        <authorList>
            <person name="Enami I."/>
            <person name="Murayama H."/>
            <person name="Ohta H."/>
            <person name="Kamo M."/>
            <person name="Nakazato K."/>
            <person name="Shen J.-R."/>
        </authorList>
    </citation>
    <scope>PROTEIN SEQUENCE OF 62-112</scope>
    <scope>FUNCTION</scope>
    <scope>SUBCELLULAR LOCATION</scope>
    <source>
        <strain>RK-1</strain>
    </source>
</reference>
<reference key="3">
    <citation type="journal article" date="2003" name="Plant Cell Physiol.">
        <title>Comparison of binding and functional properties of two extrinsic components, cyt c550 and a 12 kDa protein, in cyanobacterial PSII with those in red algal PSII.</title>
        <authorList>
            <person name="Enami I."/>
            <person name="Iwai M."/>
            <person name="Akiyama A."/>
            <person name="Suzuki T."/>
            <person name="Okumura A."/>
            <person name="Katoh T."/>
            <person name="Tada O."/>
            <person name="Ohta H."/>
            <person name="Shen J.-R."/>
        </authorList>
    </citation>
    <scope>SUBUNIT</scope>
    <scope>RECONSTITUTION EXPERIMENTS</scope>
    <source>
        <strain>RK-1</strain>
    </source>
</reference>
<sequence length="154" mass="16715">MAFISTPLGKVTVKSATVSANRRGLRMQSDSEPVVSRRALLSGALAAAVAAALARARPAQARIDYEGIGYLGGGDKIDVNNANVRAYRKFPGLYPTAAKKIVQGGPYGTPDDILKNPELSERDKEVIKKYMDRFVALPPTPEYFTDRVNNGIYK</sequence>
<evidence type="ECO:0000255" key="1"/>
<evidence type="ECO:0000269" key="2">
    <source>
    </source>
</evidence>
<evidence type="ECO:0000269" key="3">
    <source>
    </source>
</evidence>
<evidence type="ECO:0000269" key="4">
    <source>
    </source>
</evidence>
<evidence type="ECO:0000303" key="5">
    <source>
    </source>
</evidence>
<evidence type="ECO:0000305" key="6"/>
<evidence type="ECO:0000305" key="7">
    <source>
    </source>
</evidence>
<evidence type="ECO:0000305" key="8">
    <source>
    </source>
</evidence>